<accession>B1X8P9</accession>
<feature type="chain" id="PRO_1000100262" description="Dihydroorotate dehydrogenase (quinone)">
    <location>
        <begin position="1"/>
        <end position="336"/>
    </location>
</feature>
<feature type="active site" description="Nucleophile" evidence="1">
    <location>
        <position position="175"/>
    </location>
</feature>
<feature type="binding site" evidence="1">
    <location>
        <begin position="62"/>
        <end position="66"/>
    </location>
    <ligand>
        <name>FMN</name>
        <dbReference type="ChEBI" id="CHEBI:58210"/>
    </ligand>
</feature>
<feature type="binding site" evidence="1">
    <location>
        <position position="66"/>
    </location>
    <ligand>
        <name>substrate</name>
    </ligand>
</feature>
<feature type="binding site" evidence="1">
    <location>
        <position position="86"/>
    </location>
    <ligand>
        <name>FMN</name>
        <dbReference type="ChEBI" id="CHEBI:58210"/>
    </ligand>
</feature>
<feature type="binding site" evidence="1">
    <location>
        <begin position="111"/>
        <end position="115"/>
    </location>
    <ligand>
        <name>substrate</name>
    </ligand>
</feature>
<feature type="binding site" evidence="1">
    <location>
        <position position="139"/>
    </location>
    <ligand>
        <name>FMN</name>
        <dbReference type="ChEBI" id="CHEBI:58210"/>
    </ligand>
</feature>
<feature type="binding site" evidence="1">
    <location>
        <position position="172"/>
    </location>
    <ligand>
        <name>FMN</name>
        <dbReference type="ChEBI" id="CHEBI:58210"/>
    </ligand>
</feature>
<feature type="binding site" evidence="1">
    <location>
        <position position="172"/>
    </location>
    <ligand>
        <name>substrate</name>
    </ligand>
</feature>
<feature type="binding site" evidence="1">
    <location>
        <position position="177"/>
    </location>
    <ligand>
        <name>substrate</name>
    </ligand>
</feature>
<feature type="binding site" evidence="1">
    <location>
        <position position="217"/>
    </location>
    <ligand>
        <name>FMN</name>
        <dbReference type="ChEBI" id="CHEBI:58210"/>
    </ligand>
</feature>
<feature type="binding site" evidence="1">
    <location>
        <position position="245"/>
    </location>
    <ligand>
        <name>FMN</name>
        <dbReference type="ChEBI" id="CHEBI:58210"/>
    </ligand>
</feature>
<feature type="binding site" evidence="1">
    <location>
        <begin position="246"/>
        <end position="247"/>
    </location>
    <ligand>
        <name>substrate</name>
    </ligand>
</feature>
<feature type="binding site" evidence="1">
    <location>
        <position position="268"/>
    </location>
    <ligand>
        <name>FMN</name>
        <dbReference type="ChEBI" id="CHEBI:58210"/>
    </ligand>
</feature>
<feature type="binding site" evidence="1">
    <location>
        <position position="297"/>
    </location>
    <ligand>
        <name>FMN</name>
        <dbReference type="ChEBI" id="CHEBI:58210"/>
    </ligand>
</feature>
<feature type="binding site" evidence="1">
    <location>
        <begin position="318"/>
        <end position="319"/>
    </location>
    <ligand>
        <name>FMN</name>
        <dbReference type="ChEBI" id="CHEBI:58210"/>
    </ligand>
</feature>
<reference key="1">
    <citation type="journal article" date="2008" name="J. Bacteriol.">
        <title>The complete genome sequence of Escherichia coli DH10B: insights into the biology of a laboratory workhorse.</title>
        <authorList>
            <person name="Durfee T."/>
            <person name="Nelson R."/>
            <person name="Baldwin S."/>
            <person name="Plunkett G. III"/>
            <person name="Burland V."/>
            <person name="Mau B."/>
            <person name="Petrosino J.F."/>
            <person name="Qin X."/>
            <person name="Muzny D.M."/>
            <person name="Ayele M."/>
            <person name="Gibbs R.A."/>
            <person name="Csorgo B."/>
            <person name="Posfai G."/>
            <person name="Weinstock G.M."/>
            <person name="Blattner F.R."/>
        </authorList>
    </citation>
    <scope>NUCLEOTIDE SEQUENCE [LARGE SCALE GENOMIC DNA]</scope>
    <source>
        <strain>K12 / DH10B</strain>
    </source>
</reference>
<organism>
    <name type="scientific">Escherichia coli (strain K12 / DH10B)</name>
    <dbReference type="NCBI Taxonomy" id="316385"/>
    <lineage>
        <taxon>Bacteria</taxon>
        <taxon>Pseudomonadati</taxon>
        <taxon>Pseudomonadota</taxon>
        <taxon>Gammaproteobacteria</taxon>
        <taxon>Enterobacterales</taxon>
        <taxon>Enterobacteriaceae</taxon>
        <taxon>Escherichia</taxon>
    </lineage>
</organism>
<comment type="function">
    <text evidence="1">Catalyzes the conversion of dihydroorotate to orotate with quinone as electron acceptor.</text>
</comment>
<comment type="catalytic activity">
    <reaction evidence="1">
        <text>(S)-dihydroorotate + a quinone = orotate + a quinol</text>
        <dbReference type="Rhea" id="RHEA:30187"/>
        <dbReference type="ChEBI" id="CHEBI:24646"/>
        <dbReference type="ChEBI" id="CHEBI:30839"/>
        <dbReference type="ChEBI" id="CHEBI:30864"/>
        <dbReference type="ChEBI" id="CHEBI:132124"/>
        <dbReference type="EC" id="1.3.5.2"/>
    </reaction>
</comment>
<comment type="cofactor">
    <cofactor evidence="1">
        <name>FMN</name>
        <dbReference type="ChEBI" id="CHEBI:58210"/>
    </cofactor>
    <text evidence="1">Binds 1 FMN per subunit.</text>
</comment>
<comment type="pathway">
    <text evidence="1">Pyrimidine metabolism; UMP biosynthesis via de novo pathway; orotate from (S)-dihydroorotate (quinone route): step 1/1.</text>
</comment>
<comment type="subunit">
    <text evidence="1">Monomer.</text>
</comment>
<comment type="subcellular location">
    <subcellularLocation>
        <location evidence="1">Cell membrane</location>
        <topology evidence="1">Peripheral membrane protein</topology>
    </subcellularLocation>
</comment>
<comment type="similarity">
    <text evidence="1">Belongs to the dihydroorotate dehydrogenase family. Type 2 subfamily.</text>
</comment>
<gene>
    <name evidence="1" type="primary">pyrD</name>
    <name type="ordered locus">ECDH10B_1015</name>
</gene>
<dbReference type="EC" id="1.3.5.2" evidence="1"/>
<dbReference type="EMBL" id="CP000948">
    <property type="protein sequence ID" value="ACB02145.1"/>
    <property type="molecule type" value="Genomic_DNA"/>
</dbReference>
<dbReference type="RefSeq" id="WP_001295352.1">
    <property type="nucleotide sequence ID" value="NC_010473.1"/>
</dbReference>
<dbReference type="SMR" id="B1X8P9"/>
<dbReference type="GeneID" id="93776469"/>
<dbReference type="KEGG" id="ecd:ECDH10B_1015"/>
<dbReference type="HOGENOM" id="CLU_013640_2_0_6"/>
<dbReference type="BRENDA" id="1.3.5.2">
    <property type="organism ID" value="2026"/>
</dbReference>
<dbReference type="UniPathway" id="UPA00070">
    <property type="reaction ID" value="UER00946"/>
</dbReference>
<dbReference type="GO" id="GO:0005737">
    <property type="term" value="C:cytoplasm"/>
    <property type="evidence" value="ECO:0007669"/>
    <property type="project" value="InterPro"/>
</dbReference>
<dbReference type="GO" id="GO:0005886">
    <property type="term" value="C:plasma membrane"/>
    <property type="evidence" value="ECO:0007669"/>
    <property type="project" value="UniProtKB-SubCell"/>
</dbReference>
<dbReference type="GO" id="GO:0106430">
    <property type="term" value="F:dihydroorotate dehydrogenase (quinone) activity"/>
    <property type="evidence" value="ECO:0007669"/>
    <property type="project" value="UniProtKB-EC"/>
</dbReference>
<dbReference type="GO" id="GO:0006207">
    <property type="term" value="P:'de novo' pyrimidine nucleobase biosynthetic process"/>
    <property type="evidence" value="ECO:0007669"/>
    <property type="project" value="InterPro"/>
</dbReference>
<dbReference type="GO" id="GO:0044205">
    <property type="term" value="P:'de novo' UMP biosynthetic process"/>
    <property type="evidence" value="ECO:0007669"/>
    <property type="project" value="UniProtKB-UniRule"/>
</dbReference>
<dbReference type="CDD" id="cd04738">
    <property type="entry name" value="DHOD_2_like"/>
    <property type="match status" value="1"/>
</dbReference>
<dbReference type="FunFam" id="3.20.20.70:FF:000028">
    <property type="entry name" value="Dihydroorotate dehydrogenase (quinone)"/>
    <property type="match status" value="1"/>
</dbReference>
<dbReference type="Gene3D" id="3.20.20.70">
    <property type="entry name" value="Aldolase class I"/>
    <property type="match status" value="1"/>
</dbReference>
<dbReference type="HAMAP" id="MF_00225">
    <property type="entry name" value="DHO_dh_type2"/>
    <property type="match status" value="1"/>
</dbReference>
<dbReference type="InterPro" id="IPR013785">
    <property type="entry name" value="Aldolase_TIM"/>
</dbReference>
<dbReference type="InterPro" id="IPR050074">
    <property type="entry name" value="DHO_dehydrogenase"/>
</dbReference>
<dbReference type="InterPro" id="IPR012135">
    <property type="entry name" value="Dihydroorotate_DH_1_2"/>
</dbReference>
<dbReference type="InterPro" id="IPR005719">
    <property type="entry name" value="Dihydroorotate_DH_2"/>
</dbReference>
<dbReference type="InterPro" id="IPR005720">
    <property type="entry name" value="Dihydroorotate_DH_cat"/>
</dbReference>
<dbReference type="InterPro" id="IPR001295">
    <property type="entry name" value="Dihydroorotate_DH_CS"/>
</dbReference>
<dbReference type="NCBIfam" id="NF003644">
    <property type="entry name" value="PRK05286.1-1"/>
    <property type="match status" value="1"/>
</dbReference>
<dbReference type="NCBIfam" id="NF003645">
    <property type="entry name" value="PRK05286.1-2"/>
    <property type="match status" value="1"/>
</dbReference>
<dbReference type="NCBIfam" id="NF003646">
    <property type="entry name" value="PRK05286.1-4"/>
    <property type="match status" value="1"/>
</dbReference>
<dbReference type="NCBIfam" id="NF003652">
    <property type="entry name" value="PRK05286.2-5"/>
    <property type="match status" value="1"/>
</dbReference>
<dbReference type="NCBIfam" id="TIGR01036">
    <property type="entry name" value="pyrD_sub2"/>
    <property type="match status" value="1"/>
</dbReference>
<dbReference type="PANTHER" id="PTHR48109:SF4">
    <property type="entry name" value="DIHYDROOROTATE DEHYDROGENASE (QUINONE), MITOCHONDRIAL"/>
    <property type="match status" value="1"/>
</dbReference>
<dbReference type="PANTHER" id="PTHR48109">
    <property type="entry name" value="DIHYDROOROTATE DEHYDROGENASE (QUINONE), MITOCHONDRIAL-RELATED"/>
    <property type="match status" value="1"/>
</dbReference>
<dbReference type="Pfam" id="PF01180">
    <property type="entry name" value="DHO_dh"/>
    <property type="match status" value="1"/>
</dbReference>
<dbReference type="PIRSF" id="PIRSF000164">
    <property type="entry name" value="DHO_oxidase"/>
    <property type="match status" value="1"/>
</dbReference>
<dbReference type="SUPFAM" id="SSF51395">
    <property type="entry name" value="FMN-linked oxidoreductases"/>
    <property type="match status" value="1"/>
</dbReference>
<dbReference type="PROSITE" id="PS00911">
    <property type="entry name" value="DHODEHASE_1"/>
    <property type="match status" value="1"/>
</dbReference>
<dbReference type="PROSITE" id="PS00912">
    <property type="entry name" value="DHODEHASE_2"/>
    <property type="match status" value="1"/>
</dbReference>
<sequence length="336" mass="36775">MYYPFVRKALFQLDPERAHEFTFQQLRRITGTPFEALVRQKVPAKPVNCMGLTFKNPLGLAAGLDKDGECIDALGAMGFGSIEIGTVTPRPQPGNDKPRLFRLVDAEGLINRMGFNNLGVDNLVENVKKAHYDGVLGINIGKNKDTPVEQGKDDYLICMEKIYAYAGYIAINISSPNTPGLRTLQYGEALDDLLTAIKNKQNDLQAMHHKYVPIAVKIAPDLSEEELIQVADSLVRHNIDGVIATNTTLDRSLVQGMKNCDQTGGLSGRPLQLKSTEIIRRLSLELNGRLPIIGVGGIDSVIAAREKIAAGASLVQIYSGFIFKGPPLIKEIVTHI</sequence>
<name>PYRD_ECODH</name>
<proteinExistence type="inferred from homology"/>
<protein>
    <recommendedName>
        <fullName evidence="1">Dihydroorotate dehydrogenase (quinone)</fullName>
        <ecNumber evidence="1">1.3.5.2</ecNumber>
    </recommendedName>
    <alternativeName>
        <fullName evidence="1">DHOdehase</fullName>
        <shortName evidence="1">DHOD</shortName>
        <shortName evidence="1">DHODase</shortName>
    </alternativeName>
    <alternativeName>
        <fullName evidence="1">Dihydroorotate oxidase</fullName>
    </alternativeName>
</protein>
<evidence type="ECO:0000255" key="1">
    <source>
        <dbReference type="HAMAP-Rule" id="MF_00225"/>
    </source>
</evidence>
<keyword id="KW-1003">Cell membrane</keyword>
<keyword id="KW-0285">Flavoprotein</keyword>
<keyword id="KW-0288">FMN</keyword>
<keyword id="KW-0472">Membrane</keyword>
<keyword id="KW-0560">Oxidoreductase</keyword>
<keyword id="KW-0665">Pyrimidine biosynthesis</keyword>